<protein>
    <recommendedName>
        <fullName>Anthranilate synthase component 2</fullName>
        <shortName>AS</shortName>
        <shortName>ASII</shortName>
        <ecNumber>4.1.3.27</ecNumber>
    </recommendedName>
    <alternativeName>
        <fullName>Anthranilate synthase, GATase component</fullName>
    </alternativeName>
    <alternativeName>
        <fullName>Anthranilate synthase, glutamine amidotransferase component</fullName>
    </alternativeName>
</protein>
<feature type="chain" id="PRO_0000427196" description="Anthranilate synthase component 2">
    <location>
        <begin position="1"/>
        <end position="232"/>
    </location>
</feature>
<feature type="domain" description="Glutamine amidotransferase type-1" evidence="3">
    <location>
        <begin position="2"/>
        <end position="198"/>
    </location>
</feature>
<feature type="active site" description="Nucleophile; for GATase activity" evidence="3">
    <location>
        <position position="83"/>
    </location>
</feature>
<feature type="active site" description="For GATase activity" evidence="3">
    <location>
        <position position="172"/>
    </location>
</feature>
<feature type="active site" description="For GATase activity" evidence="3">
    <location>
        <position position="174"/>
    </location>
</feature>
<feature type="binding site" evidence="2">
    <location>
        <begin position="55"/>
        <end position="57"/>
    </location>
    <ligand>
        <name>L-glutamine</name>
        <dbReference type="ChEBI" id="CHEBI:58359"/>
    </ligand>
</feature>
<feature type="binding site" evidence="2">
    <location>
        <position position="87"/>
    </location>
    <ligand>
        <name>L-glutamine</name>
        <dbReference type="ChEBI" id="CHEBI:58359"/>
    </ligand>
</feature>
<feature type="binding site" evidence="2">
    <location>
        <begin position="133"/>
        <end position="134"/>
    </location>
    <ligand>
        <name>L-glutamine</name>
        <dbReference type="ChEBI" id="CHEBI:58359"/>
    </ligand>
</feature>
<sequence>MRILVVDNYDSFVFNLVQYLGQLGIEAEVWRNDDHRLSDEAAVAGQFDGVLLSPGPGTPERAGASVSIVHACAAAHTPLLGVCLGHQAIGVAFGATVDRAPELLHGKTSSVFHTNVGVLQGLPDPFTATRYHSLTILPKSLPAVLRVTARTSSGVIMAVQHTGLPIHGVQFHPESILTEGGHRILANWLTCCGWTQDDTLVRRLENEVLTAISPHFPTSTASAGEATGRTSA</sequence>
<reference key="1">
    <citation type="journal article" date="2002" name="J. Bacteriol.">
        <title>Whole-genome comparison of Mycobacterium tuberculosis clinical and laboratory strains.</title>
        <authorList>
            <person name="Fleischmann R.D."/>
            <person name="Alland D."/>
            <person name="Eisen J.A."/>
            <person name="Carpenter L."/>
            <person name="White O."/>
            <person name="Peterson J.D."/>
            <person name="DeBoy R.T."/>
            <person name="Dodson R.J."/>
            <person name="Gwinn M.L."/>
            <person name="Haft D.H."/>
            <person name="Hickey E.K."/>
            <person name="Kolonay J.F."/>
            <person name="Nelson W.C."/>
            <person name="Umayam L.A."/>
            <person name="Ermolaeva M.D."/>
            <person name="Salzberg S.L."/>
            <person name="Delcher A."/>
            <person name="Utterback T.R."/>
            <person name="Weidman J.F."/>
            <person name="Khouri H.M."/>
            <person name="Gill J."/>
            <person name="Mikula A."/>
            <person name="Bishai W."/>
            <person name="Jacobs W.R. Jr."/>
            <person name="Venter J.C."/>
            <person name="Fraser C.M."/>
        </authorList>
    </citation>
    <scope>NUCLEOTIDE SEQUENCE [LARGE SCALE GENOMIC DNA]</scope>
    <source>
        <strain>CDC 1551 / Oshkosh</strain>
    </source>
</reference>
<comment type="function">
    <text evidence="1">Part of a heterotetrameric complex that catalyzes the two-step biosynthesis of anthranilate, an intermediate in the biosynthesis of L-tryptophan. In the first step, the glutamine-binding beta subunit (TrpG) of anthranilate synthase (AS) provides the glutamine amidotransferase activity which generates ammonia as a substrate that, along with chorismate, is used in the second step, catalyzed by the large alpha subunit of AS (TrpE) to produce anthranilate. In the absence of TrpG, TrpE can synthesize anthranilate directly from chorismate and high concentrations of ammonia (By similarity).</text>
</comment>
<comment type="catalytic activity">
    <reaction>
        <text>chorismate + L-glutamine = anthranilate + pyruvate + L-glutamate + H(+)</text>
        <dbReference type="Rhea" id="RHEA:21732"/>
        <dbReference type="ChEBI" id="CHEBI:15361"/>
        <dbReference type="ChEBI" id="CHEBI:15378"/>
        <dbReference type="ChEBI" id="CHEBI:16567"/>
        <dbReference type="ChEBI" id="CHEBI:29748"/>
        <dbReference type="ChEBI" id="CHEBI:29985"/>
        <dbReference type="ChEBI" id="CHEBI:58359"/>
        <dbReference type="EC" id="4.1.3.27"/>
    </reaction>
</comment>
<comment type="pathway">
    <text>Amino-acid biosynthesis; L-tryptophan biosynthesis; L-tryptophan from chorismate: step 1/5.</text>
</comment>
<comment type="subunit">
    <text evidence="1">Heterotetramer consisting of two non-identical subunits: a beta subunit (TrpG) and a large alpha subunit (TrpE).</text>
</comment>
<keyword id="KW-0028">Amino-acid biosynthesis</keyword>
<keyword id="KW-0057">Aromatic amino acid biosynthesis</keyword>
<keyword id="KW-0315">Glutamine amidotransferase</keyword>
<keyword id="KW-0456">Lyase</keyword>
<keyword id="KW-1185">Reference proteome</keyword>
<keyword id="KW-0822">Tryptophan biosynthesis</keyword>
<proteinExistence type="inferred from homology"/>
<dbReference type="EC" id="4.1.3.27"/>
<dbReference type="EMBL" id="AE000516">
    <property type="protein sequence ID" value="AAK44238.1"/>
    <property type="molecule type" value="Genomic_DNA"/>
</dbReference>
<dbReference type="PIR" id="C70699">
    <property type="entry name" value="C70699"/>
</dbReference>
<dbReference type="RefSeq" id="WP_003899773.1">
    <property type="nucleotide sequence ID" value="NZ_KK341227.1"/>
</dbReference>
<dbReference type="SMR" id="P9WN34"/>
<dbReference type="MEROPS" id="C26.955"/>
<dbReference type="KEGG" id="mtc:MT0016"/>
<dbReference type="PATRIC" id="fig|83331.31.peg.17"/>
<dbReference type="HOGENOM" id="CLU_014340_1_2_11"/>
<dbReference type="UniPathway" id="UPA00035">
    <property type="reaction ID" value="UER00040"/>
</dbReference>
<dbReference type="Proteomes" id="UP000001020">
    <property type="component" value="Chromosome"/>
</dbReference>
<dbReference type="GO" id="GO:0005829">
    <property type="term" value="C:cytosol"/>
    <property type="evidence" value="ECO:0007669"/>
    <property type="project" value="TreeGrafter"/>
</dbReference>
<dbReference type="GO" id="GO:0004049">
    <property type="term" value="F:anthranilate synthase activity"/>
    <property type="evidence" value="ECO:0007669"/>
    <property type="project" value="UniProtKB-EC"/>
</dbReference>
<dbReference type="GO" id="GO:0000162">
    <property type="term" value="P:L-tryptophan biosynthetic process"/>
    <property type="evidence" value="ECO:0007669"/>
    <property type="project" value="UniProtKB-UniPathway"/>
</dbReference>
<dbReference type="CDD" id="cd01743">
    <property type="entry name" value="GATase1_Anthranilate_Synthase"/>
    <property type="match status" value="1"/>
</dbReference>
<dbReference type="FunFam" id="3.40.50.880:FF:000003">
    <property type="entry name" value="Anthranilate synthase component II"/>
    <property type="match status" value="1"/>
</dbReference>
<dbReference type="Gene3D" id="3.40.50.880">
    <property type="match status" value="1"/>
</dbReference>
<dbReference type="InterPro" id="IPR050472">
    <property type="entry name" value="Anth_synth/Amidotransfase"/>
</dbReference>
<dbReference type="InterPro" id="IPR029062">
    <property type="entry name" value="Class_I_gatase-like"/>
</dbReference>
<dbReference type="InterPro" id="IPR017926">
    <property type="entry name" value="GATASE"/>
</dbReference>
<dbReference type="InterPro" id="IPR006221">
    <property type="entry name" value="TrpG/PapA_dom"/>
</dbReference>
<dbReference type="NCBIfam" id="NF005849">
    <property type="entry name" value="PRK07765.1"/>
    <property type="match status" value="1"/>
</dbReference>
<dbReference type="NCBIfam" id="TIGR00566">
    <property type="entry name" value="trpG_papA"/>
    <property type="match status" value="1"/>
</dbReference>
<dbReference type="PANTHER" id="PTHR43418:SF4">
    <property type="entry name" value="MULTIFUNCTIONAL TRYPTOPHAN BIOSYNTHESIS PROTEIN"/>
    <property type="match status" value="1"/>
</dbReference>
<dbReference type="PANTHER" id="PTHR43418">
    <property type="entry name" value="MULTIFUNCTIONAL TRYPTOPHAN BIOSYNTHESIS PROTEIN-RELATED"/>
    <property type="match status" value="1"/>
</dbReference>
<dbReference type="Pfam" id="PF00117">
    <property type="entry name" value="GATase"/>
    <property type="match status" value="1"/>
</dbReference>
<dbReference type="PRINTS" id="PR00097">
    <property type="entry name" value="ANTSNTHASEII"/>
</dbReference>
<dbReference type="PRINTS" id="PR00099">
    <property type="entry name" value="CPSGATASE"/>
</dbReference>
<dbReference type="PRINTS" id="PR00096">
    <property type="entry name" value="GATASE"/>
</dbReference>
<dbReference type="SUPFAM" id="SSF52317">
    <property type="entry name" value="Class I glutamine amidotransferase-like"/>
    <property type="match status" value="1"/>
</dbReference>
<dbReference type="PROSITE" id="PS51273">
    <property type="entry name" value="GATASE_TYPE_1"/>
    <property type="match status" value="1"/>
</dbReference>
<organism>
    <name type="scientific">Mycobacterium tuberculosis (strain CDC 1551 / Oshkosh)</name>
    <dbReference type="NCBI Taxonomy" id="83331"/>
    <lineage>
        <taxon>Bacteria</taxon>
        <taxon>Bacillati</taxon>
        <taxon>Actinomycetota</taxon>
        <taxon>Actinomycetes</taxon>
        <taxon>Mycobacteriales</taxon>
        <taxon>Mycobacteriaceae</taxon>
        <taxon>Mycobacterium</taxon>
        <taxon>Mycobacterium tuberculosis complex</taxon>
    </lineage>
</organism>
<name>TRPG_MYCTO</name>
<gene>
    <name type="primary">trpG</name>
    <name type="ordered locus">MT0016</name>
</gene>
<evidence type="ECO:0000250" key="1"/>
<evidence type="ECO:0000250" key="2">
    <source>
        <dbReference type="UniProtKB" id="P00900"/>
    </source>
</evidence>
<evidence type="ECO:0000255" key="3">
    <source>
        <dbReference type="PROSITE-ProRule" id="PRU00605"/>
    </source>
</evidence>
<accession>P9WN34</accession>
<accession>L0T2A5</accession>
<accession>Q79G16</accession>
<accession>Q7DAK6</accession>